<name>NDK_ROSS1</name>
<reference key="1">
    <citation type="submission" date="2007-04" db="EMBL/GenBank/DDBJ databases">
        <title>Complete sequence of Roseiflexus sp. RS-1.</title>
        <authorList>
            <consortium name="US DOE Joint Genome Institute"/>
            <person name="Copeland A."/>
            <person name="Lucas S."/>
            <person name="Lapidus A."/>
            <person name="Barry K."/>
            <person name="Detter J.C."/>
            <person name="Glavina del Rio T."/>
            <person name="Hammon N."/>
            <person name="Israni S."/>
            <person name="Dalin E."/>
            <person name="Tice H."/>
            <person name="Pitluck S."/>
            <person name="Chertkov O."/>
            <person name="Brettin T."/>
            <person name="Bruce D."/>
            <person name="Han C."/>
            <person name="Schmutz J."/>
            <person name="Larimer F."/>
            <person name="Land M."/>
            <person name="Hauser L."/>
            <person name="Kyrpides N."/>
            <person name="Mikhailova N."/>
            <person name="Bryant D.A."/>
            <person name="Richardson P."/>
        </authorList>
    </citation>
    <scope>NUCLEOTIDE SEQUENCE [LARGE SCALE GENOMIC DNA]</scope>
    <source>
        <strain>RS-1</strain>
    </source>
</reference>
<proteinExistence type="inferred from homology"/>
<feature type="chain" id="PRO_1000026289" description="Nucleoside diphosphate kinase">
    <location>
        <begin position="1"/>
        <end position="149"/>
    </location>
</feature>
<feature type="active site" description="Pros-phosphohistidine intermediate" evidence="1">
    <location>
        <position position="115"/>
    </location>
</feature>
<feature type="binding site" evidence="1">
    <location>
        <position position="9"/>
    </location>
    <ligand>
        <name>ATP</name>
        <dbReference type="ChEBI" id="CHEBI:30616"/>
    </ligand>
</feature>
<feature type="binding site" evidence="1">
    <location>
        <position position="57"/>
    </location>
    <ligand>
        <name>ATP</name>
        <dbReference type="ChEBI" id="CHEBI:30616"/>
    </ligand>
</feature>
<feature type="binding site" evidence="1">
    <location>
        <position position="85"/>
    </location>
    <ligand>
        <name>ATP</name>
        <dbReference type="ChEBI" id="CHEBI:30616"/>
    </ligand>
</feature>
<feature type="binding site" evidence="1">
    <location>
        <position position="91"/>
    </location>
    <ligand>
        <name>ATP</name>
        <dbReference type="ChEBI" id="CHEBI:30616"/>
    </ligand>
</feature>
<feature type="binding site" evidence="1">
    <location>
        <position position="102"/>
    </location>
    <ligand>
        <name>ATP</name>
        <dbReference type="ChEBI" id="CHEBI:30616"/>
    </ligand>
</feature>
<feature type="binding site" evidence="1">
    <location>
        <position position="112"/>
    </location>
    <ligand>
        <name>ATP</name>
        <dbReference type="ChEBI" id="CHEBI:30616"/>
    </ligand>
</feature>
<gene>
    <name evidence="1" type="primary">ndk</name>
    <name type="ordered locus">RoseRS_0772</name>
</gene>
<protein>
    <recommendedName>
        <fullName evidence="1">Nucleoside diphosphate kinase</fullName>
        <shortName evidence="1">NDK</shortName>
        <shortName evidence="1">NDP kinase</shortName>
        <ecNumber evidence="1">2.7.4.6</ecNumber>
    </recommendedName>
    <alternativeName>
        <fullName evidence="1">Nucleoside-2-P kinase</fullName>
    </alternativeName>
</protein>
<comment type="function">
    <text evidence="1">Major role in the synthesis of nucleoside triphosphates other than ATP. The ATP gamma phosphate is transferred to the NDP beta phosphate via a ping-pong mechanism, using a phosphorylated active-site intermediate.</text>
</comment>
<comment type="catalytic activity">
    <reaction evidence="1">
        <text>a 2'-deoxyribonucleoside 5'-diphosphate + ATP = a 2'-deoxyribonucleoside 5'-triphosphate + ADP</text>
        <dbReference type="Rhea" id="RHEA:44640"/>
        <dbReference type="ChEBI" id="CHEBI:30616"/>
        <dbReference type="ChEBI" id="CHEBI:61560"/>
        <dbReference type="ChEBI" id="CHEBI:73316"/>
        <dbReference type="ChEBI" id="CHEBI:456216"/>
        <dbReference type="EC" id="2.7.4.6"/>
    </reaction>
</comment>
<comment type="catalytic activity">
    <reaction evidence="1">
        <text>a ribonucleoside 5'-diphosphate + ATP = a ribonucleoside 5'-triphosphate + ADP</text>
        <dbReference type="Rhea" id="RHEA:18113"/>
        <dbReference type="ChEBI" id="CHEBI:30616"/>
        <dbReference type="ChEBI" id="CHEBI:57930"/>
        <dbReference type="ChEBI" id="CHEBI:61557"/>
        <dbReference type="ChEBI" id="CHEBI:456216"/>
        <dbReference type="EC" id="2.7.4.6"/>
    </reaction>
</comment>
<comment type="cofactor">
    <cofactor evidence="1">
        <name>Mg(2+)</name>
        <dbReference type="ChEBI" id="CHEBI:18420"/>
    </cofactor>
</comment>
<comment type="subunit">
    <text evidence="1">Homotetramer.</text>
</comment>
<comment type="subcellular location">
    <subcellularLocation>
        <location evidence="1">Cytoplasm</location>
    </subcellularLocation>
</comment>
<comment type="similarity">
    <text evidence="1">Belongs to the NDK family.</text>
</comment>
<evidence type="ECO:0000255" key="1">
    <source>
        <dbReference type="HAMAP-Rule" id="MF_00451"/>
    </source>
</evidence>
<organism>
    <name type="scientific">Roseiflexus sp. (strain RS-1)</name>
    <dbReference type="NCBI Taxonomy" id="357808"/>
    <lineage>
        <taxon>Bacteria</taxon>
        <taxon>Bacillati</taxon>
        <taxon>Chloroflexota</taxon>
        <taxon>Chloroflexia</taxon>
        <taxon>Chloroflexales</taxon>
        <taxon>Roseiflexineae</taxon>
        <taxon>Roseiflexaceae</taxon>
        <taxon>Roseiflexus</taxon>
    </lineage>
</organism>
<keyword id="KW-0067">ATP-binding</keyword>
<keyword id="KW-0963">Cytoplasm</keyword>
<keyword id="KW-0418">Kinase</keyword>
<keyword id="KW-0460">Magnesium</keyword>
<keyword id="KW-0479">Metal-binding</keyword>
<keyword id="KW-0546">Nucleotide metabolism</keyword>
<keyword id="KW-0547">Nucleotide-binding</keyword>
<keyword id="KW-0597">Phosphoprotein</keyword>
<keyword id="KW-0808">Transferase</keyword>
<dbReference type="EC" id="2.7.4.6" evidence="1"/>
<dbReference type="EMBL" id="CP000686">
    <property type="protein sequence ID" value="ABQ89188.1"/>
    <property type="molecule type" value="Genomic_DNA"/>
</dbReference>
<dbReference type="RefSeq" id="WP_011955542.1">
    <property type="nucleotide sequence ID" value="NC_009523.1"/>
</dbReference>
<dbReference type="SMR" id="A5URD5"/>
<dbReference type="STRING" id="357808.RoseRS_0772"/>
<dbReference type="KEGG" id="rrs:RoseRS_0772"/>
<dbReference type="eggNOG" id="COG0105">
    <property type="taxonomic scope" value="Bacteria"/>
</dbReference>
<dbReference type="HOGENOM" id="CLU_060216_6_3_0"/>
<dbReference type="OrthoDB" id="9801161at2"/>
<dbReference type="Proteomes" id="UP000006554">
    <property type="component" value="Chromosome"/>
</dbReference>
<dbReference type="GO" id="GO:0005737">
    <property type="term" value="C:cytoplasm"/>
    <property type="evidence" value="ECO:0007669"/>
    <property type="project" value="UniProtKB-SubCell"/>
</dbReference>
<dbReference type="GO" id="GO:0005524">
    <property type="term" value="F:ATP binding"/>
    <property type="evidence" value="ECO:0007669"/>
    <property type="project" value="UniProtKB-UniRule"/>
</dbReference>
<dbReference type="GO" id="GO:0046872">
    <property type="term" value="F:metal ion binding"/>
    <property type="evidence" value="ECO:0007669"/>
    <property type="project" value="UniProtKB-KW"/>
</dbReference>
<dbReference type="GO" id="GO:0004550">
    <property type="term" value="F:nucleoside diphosphate kinase activity"/>
    <property type="evidence" value="ECO:0007669"/>
    <property type="project" value="UniProtKB-UniRule"/>
</dbReference>
<dbReference type="GO" id="GO:0006241">
    <property type="term" value="P:CTP biosynthetic process"/>
    <property type="evidence" value="ECO:0007669"/>
    <property type="project" value="UniProtKB-UniRule"/>
</dbReference>
<dbReference type="GO" id="GO:0006183">
    <property type="term" value="P:GTP biosynthetic process"/>
    <property type="evidence" value="ECO:0007669"/>
    <property type="project" value="UniProtKB-UniRule"/>
</dbReference>
<dbReference type="GO" id="GO:0006228">
    <property type="term" value="P:UTP biosynthetic process"/>
    <property type="evidence" value="ECO:0007669"/>
    <property type="project" value="UniProtKB-UniRule"/>
</dbReference>
<dbReference type="CDD" id="cd04413">
    <property type="entry name" value="NDPk_I"/>
    <property type="match status" value="1"/>
</dbReference>
<dbReference type="FunFam" id="3.30.70.141:FF:000003">
    <property type="entry name" value="Nucleoside diphosphate kinase"/>
    <property type="match status" value="1"/>
</dbReference>
<dbReference type="Gene3D" id="3.30.70.141">
    <property type="entry name" value="Nucleoside diphosphate kinase-like domain"/>
    <property type="match status" value="1"/>
</dbReference>
<dbReference type="HAMAP" id="MF_00451">
    <property type="entry name" value="NDP_kinase"/>
    <property type="match status" value="1"/>
</dbReference>
<dbReference type="InterPro" id="IPR034907">
    <property type="entry name" value="NDK-like_dom"/>
</dbReference>
<dbReference type="InterPro" id="IPR036850">
    <property type="entry name" value="NDK-like_dom_sf"/>
</dbReference>
<dbReference type="InterPro" id="IPR001564">
    <property type="entry name" value="Nucleoside_diP_kinase"/>
</dbReference>
<dbReference type="InterPro" id="IPR023005">
    <property type="entry name" value="Nucleoside_diP_kinase_AS"/>
</dbReference>
<dbReference type="NCBIfam" id="NF001908">
    <property type="entry name" value="PRK00668.1"/>
    <property type="match status" value="1"/>
</dbReference>
<dbReference type="PANTHER" id="PTHR11349">
    <property type="entry name" value="NUCLEOSIDE DIPHOSPHATE KINASE"/>
    <property type="match status" value="1"/>
</dbReference>
<dbReference type="Pfam" id="PF00334">
    <property type="entry name" value="NDK"/>
    <property type="match status" value="1"/>
</dbReference>
<dbReference type="PRINTS" id="PR01243">
    <property type="entry name" value="NUCDPKINASE"/>
</dbReference>
<dbReference type="SMART" id="SM00562">
    <property type="entry name" value="NDK"/>
    <property type="match status" value="1"/>
</dbReference>
<dbReference type="SUPFAM" id="SSF54919">
    <property type="entry name" value="Nucleoside diphosphate kinase, NDK"/>
    <property type="match status" value="1"/>
</dbReference>
<dbReference type="PROSITE" id="PS00469">
    <property type="entry name" value="NDPK"/>
    <property type="match status" value="1"/>
</dbReference>
<dbReference type="PROSITE" id="PS51374">
    <property type="entry name" value="NDPK_LIKE"/>
    <property type="match status" value="1"/>
</dbReference>
<accession>A5URD5</accession>
<sequence>MERSLIILKPDAVQRGLIGPILTRIEQRGLRIVGMKLMQIDESLARRHYAIHEGKAFFDSLITYITSGPVVVLVVTGKNIIEIVRSMVGATNPVKAAPGTIRGDFALDIGRNLIHASDSPENGEMEVSLFFRPEELVEMHRSTDQWIYE</sequence>